<gene>
    <name evidence="1" type="primary">rplK</name>
    <name type="ordered locus">LI0933</name>
</gene>
<name>RL11_LAWIP</name>
<proteinExistence type="inferred from homology"/>
<feature type="chain" id="PRO_0000258167" description="Large ribosomal subunit protein uL11">
    <location>
        <begin position="1"/>
        <end position="140"/>
    </location>
</feature>
<reference key="1">
    <citation type="submission" date="2005-11" db="EMBL/GenBank/DDBJ databases">
        <title>The complete genome sequence of Lawsonia intracellularis: the causative agent of proliferative enteropathy.</title>
        <authorList>
            <person name="Kaur K."/>
            <person name="Zhang Q."/>
            <person name="Beckler D."/>
            <person name="Munir S."/>
            <person name="Li L."/>
            <person name="Kinsley K."/>
            <person name="Herron L."/>
            <person name="Peterson A."/>
            <person name="May B."/>
            <person name="Singh S."/>
            <person name="Gebhart C."/>
            <person name="Kapur V."/>
        </authorList>
    </citation>
    <scope>NUCLEOTIDE SEQUENCE [LARGE SCALE GENOMIC DNA]</scope>
    <source>
        <strain>PHE/MN1-00</strain>
    </source>
</reference>
<evidence type="ECO:0000255" key="1">
    <source>
        <dbReference type="HAMAP-Rule" id="MF_00736"/>
    </source>
</evidence>
<evidence type="ECO:0000305" key="2"/>
<comment type="function">
    <text evidence="1">Forms part of the ribosomal stalk which helps the ribosome interact with GTP-bound translation factors.</text>
</comment>
<comment type="subunit">
    <text evidence="1">Part of the ribosomal stalk of the 50S ribosomal subunit. Interacts with L10 and the large rRNA to form the base of the stalk. L10 forms an elongated spine to which L12 dimers bind in a sequential fashion forming a multimeric L10(L12)X complex.</text>
</comment>
<comment type="PTM">
    <text evidence="1">One or more lysine residues are methylated.</text>
</comment>
<comment type="similarity">
    <text evidence="1">Belongs to the universal ribosomal protein uL11 family.</text>
</comment>
<protein>
    <recommendedName>
        <fullName evidence="1">Large ribosomal subunit protein uL11</fullName>
    </recommendedName>
    <alternativeName>
        <fullName evidence="2">50S ribosomal protein L11</fullName>
    </alternativeName>
</protein>
<organism>
    <name type="scientific">Lawsonia intracellularis (strain PHE/MN1-00)</name>
    <dbReference type="NCBI Taxonomy" id="363253"/>
    <lineage>
        <taxon>Bacteria</taxon>
        <taxon>Pseudomonadati</taxon>
        <taxon>Thermodesulfobacteriota</taxon>
        <taxon>Desulfovibrionia</taxon>
        <taxon>Desulfovibrionales</taxon>
        <taxon>Desulfovibrionaceae</taxon>
        <taxon>Lawsonia</taxon>
    </lineage>
</organism>
<accession>Q1MPU0</accession>
<keyword id="KW-0488">Methylation</keyword>
<keyword id="KW-1185">Reference proteome</keyword>
<keyword id="KW-0687">Ribonucleoprotein</keyword>
<keyword id="KW-0689">Ribosomal protein</keyword>
<keyword id="KW-0694">RNA-binding</keyword>
<keyword id="KW-0699">rRNA-binding</keyword>
<sequence>MAKKELAKIKLQIPAGVANPSPPVGPALGQHGLNIMQFCKEFNARTQDQKGMIIPVVITAYADRSFTFITKTPPAAVLIMKAAKIDKGSGEPNRNKVGKISIEQVEEIAKLKLPDLTAKDLDSAKRSIIGTARSMGIEIK</sequence>
<dbReference type="EMBL" id="AM180252">
    <property type="protein sequence ID" value="CAJ54987.1"/>
    <property type="molecule type" value="Genomic_DNA"/>
</dbReference>
<dbReference type="RefSeq" id="WP_011527016.1">
    <property type="nucleotide sequence ID" value="NC_008011.1"/>
</dbReference>
<dbReference type="SMR" id="Q1MPU0"/>
<dbReference type="STRING" id="363253.LI0933"/>
<dbReference type="KEGG" id="lip:LI0933"/>
<dbReference type="eggNOG" id="COG0080">
    <property type="taxonomic scope" value="Bacteria"/>
</dbReference>
<dbReference type="HOGENOM" id="CLU_074237_2_0_7"/>
<dbReference type="OrthoDB" id="9802408at2"/>
<dbReference type="Proteomes" id="UP000002430">
    <property type="component" value="Chromosome"/>
</dbReference>
<dbReference type="GO" id="GO:0022625">
    <property type="term" value="C:cytosolic large ribosomal subunit"/>
    <property type="evidence" value="ECO:0007669"/>
    <property type="project" value="TreeGrafter"/>
</dbReference>
<dbReference type="GO" id="GO:0070180">
    <property type="term" value="F:large ribosomal subunit rRNA binding"/>
    <property type="evidence" value="ECO:0007669"/>
    <property type="project" value="UniProtKB-UniRule"/>
</dbReference>
<dbReference type="GO" id="GO:0003735">
    <property type="term" value="F:structural constituent of ribosome"/>
    <property type="evidence" value="ECO:0007669"/>
    <property type="project" value="InterPro"/>
</dbReference>
<dbReference type="GO" id="GO:0006412">
    <property type="term" value="P:translation"/>
    <property type="evidence" value="ECO:0007669"/>
    <property type="project" value="UniProtKB-UniRule"/>
</dbReference>
<dbReference type="CDD" id="cd00349">
    <property type="entry name" value="Ribosomal_L11"/>
    <property type="match status" value="1"/>
</dbReference>
<dbReference type="FunFam" id="1.10.10.250:FF:000001">
    <property type="entry name" value="50S ribosomal protein L11"/>
    <property type="match status" value="1"/>
</dbReference>
<dbReference type="FunFam" id="3.30.1550.10:FF:000001">
    <property type="entry name" value="50S ribosomal protein L11"/>
    <property type="match status" value="1"/>
</dbReference>
<dbReference type="Gene3D" id="1.10.10.250">
    <property type="entry name" value="Ribosomal protein L11, C-terminal domain"/>
    <property type="match status" value="1"/>
</dbReference>
<dbReference type="Gene3D" id="3.30.1550.10">
    <property type="entry name" value="Ribosomal protein L11/L12, N-terminal domain"/>
    <property type="match status" value="1"/>
</dbReference>
<dbReference type="HAMAP" id="MF_00736">
    <property type="entry name" value="Ribosomal_uL11"/>
    <property type="match status" value="1"/>
</dbReference>
<dbReference type="InterPro" id="IPR000911">
    <property type="entry name" value="Ribosomal_uL11"/>
</dbReference>
<dbReference type="InterPro" id="IPR006519">
    <property type="entry name" value="Ribosomal_uL11_bac-typ"/>
</dbReference>
<dbReference type="InterPro" id="IPR020783">
    <property type="entry name" value="Ribosomal_uL11_C"/>
</dbReference>
<dbReference type="InterPro" id="IPR036769">
    <property type="entry name" value="Ribosomal_uL11_C_sf"/>
</dbReference>
<dbReference type="InterPro" id="IPR020784">
    <property type="entry name" value="Ribosomal_uL11_N"/>
</dbReference>
<dbReference type="InterPro" id="IPR036796">
    <property type="entry name" value="Ribosomal_uL11_N_sf"/>
</dbReference>
<dbReference type="NCBIfam" id="TIGR01632">
    <property type="entry name" value="L11_bact"/>
    <property type="match status" value="1"/>
</dbReference>
<dbReference type="PANTHER" id="PTHR11661">
    <property type="entry name" value="60S RIBOSOMAL PROTEIN L12"/>
    <property type="match status" value="1"/>
</dbReference>
<dbReference type="PANTHER" id="PTHR11661:SF1">
    <property type="entry name" value="LARGE RIBOSOMAL SUBUNIT PROTEIN UL11M"/>
    <property type="match status" value="1"/>
</dbReference>
<dbReference type="Pfam" id="PF00298">
    <property type="entry name" value="Ribosomal_L11"/>
    <property type="match status" value="1"/>
</dbReference>
<dbReference type="Pfam" id="PF03946">
    <property type="entry name" value="Ribosomal_L11_N"/>
    <property type="match status" value="1"/>
</dbReference>
<dbReference type="SMART" id="SM00649">
    <property type="entry name" value="RL11"/>
    <property type="match status" value="1"/>
</dbReference>
<dbReference type="SUPFAM" id="SSF54747">
    <property type="entry name" value="Ribosomal L11/L12e N-terminal domain"/>
    <property type="match status" value="1"/>
</dbReference>
<dbReference type="SUPFAM" id="SSF46906">
    <property type="entry name" value="Ribosomal protein L11, C-terminal domain"/>
    <property type="match status" value="1"/>
</dbReference>